<reference key="1">
    <citation type="journal article" date="1995" name="J. Bone Miner. Res.">
        <title>Characterization of structural sequences in the chicken osteocalcin gene: expression of osteocalcin by maturing osteoblasts and by hypertrophic chondrocytes in vitro.</title>
        <authorList>
            <person name="Neugebauer B.M."/>
            <person name="Moore M.A."/>
            <person name="Broess M."/>
            <person name="Gerstenfeld L.C."/>
            <person name="Hauschka P.V."/>
        </authorList>
    </citation>
    <scope>NUCLEOTIDE SEQUENCE [MRNA]</scope>
    <source>
        <strain>White leghorn</strain>
        <tissue>Bone</tissue>
    </source>
</reference>
<reference key="2">
    <citation type="journal article" date="1981" name="J. Biol. Chem.">
        <title>Gas chromatographic mass spectrometric sequence determination of osteocalcin, a gamma-carboxyglutamic acid-containing protein from chicken bone.</title>
        <authorList>
            <person name="Carr S.A."/>
            <person name="Hauschka P.V."/>
            <person name="Biemann K."/>
        </authorList>
    </citation>
    <scope>PROTEIN SEQUENCE OF 49-97</scope>
    <scope>FUNCTION</scope>
    <scope>SUBCELLULAR LOCATION</scope>
    <scope>GAMMA-CARBOXYGLUTAMATION AT GLU-65; GLU-69 AND GLU-72</scope>
</reference>
<accession>P02822</accession>
<accession>Q90620</accession>
<keyword id="KW-0091">Biomineralization</keyword>
<keyword id="KW-0106">Calcium</keyword>
<keyword id="KW-0165">Cleavage on pair of basic residues</keyword>
<keyword id="KW-0903">Direct protein sequencing</keyword>
<keyword id="KW-1015">Disulfide bond</keyword>
<keyword id="KW-0301">Gamma-carboxyglutamic acid</keyword>
<keyword id="KW-0372">Hormone</keyword>
<keyword id="KW-0479">Metal-binding</keyword>
<keyword id="KW-1185">Reference proteome</keyword>
<keyword id="KW-0964">Secreted</keyword>
<keyword id="KW-0732">Signal</keyword>
<sequence>MKAAALLLLAALLTFSLCRSAPDGSDARSAKAFISHRQRAEMVRRQKRHYAQDSGVAGAPPNPLEAQREVCELSPDCDELADQIGFQEAYRRFYGPV</sequence>
<organism>
    <name type="scientific">Gallus gallus</name>
    <name type="common">Chicken</name>
    <dbReference type="NCBI Taxonomy" id="9031"/>
    <lineage>
        <taxon>Eukaryota</taxon>
        <taxon>Metazoa</taxon>
        <taxon>Chordata</taxon>
        <taxon>Craniata</taxon>
        <taxon>Vertebrata</taxon>
        <taxon>Euteleostomi</taxon>
        <taxon>Archelosauria</taxon>
        <taxon>Archosauria</taxon>
        <taxon>Dinosauria</taxon>
        <taxon>Saurischia</taxon>
        <taxon>Theropoda</taxon>
        <taxon>Coelurosauria</taxon>
        <taxon>Aves</taxon>
        <taxon>Neognathae</taxon>
        <taxon>Galloanserae</taxon>
        <taxon>Galliformes</taxon>
        <taxon>Phasianidae</taxon>
        <taxon>Phasianinae</taxon>
        <taxon>Gallus</taxon>
    </lineage>
</organism>
<gene>
    <name type="primary">BGLAP</name>
</gene>
<evidence type="ECO:0000250" key="1">
    <source>
        <dbReference type="UniProtKB" id="P02820"/>
    </source>
</evidence>
<evidence type="ECO:0000250" key="2">
    <source>
        <dbReference type="UniProtKB" id="P86546"/>
    </source>
</evidence>
<evidence type="ECO:0000255" key="3"/>
<evidence type="ECO:0000255" key="4">
    <source>
        <dbReference type="PROSITE-ProRule" id="PRU00463"/>
    </source>
</evidence>
<evidence type="ECO:0000269" key="5">
    <source>
    </source>
</evidence>
<evidence type="ECO:0000269" key="6">
    <source>
    </source>
</evidence>
<evidence type="ECO:0000305" key="7"/>
<protein>
    <recommendedName>
        <fullName>Osteocalcin</fullName>
    </recommendedName>
    <alternativeName>
        <fullName>Bone Gla protein</fullName>
        <shortName>BGP</shortName>
    </alternativeName>
    <alternativeName>
        <fullName>Gamma-carboxyglutamic acid-containing protein</fullName>
    </alternativeName>
</protein>
<feature type="signal peptide" evidence="3">
    <location>
        <begin position="1"/>
        <end position="20"/>
    </location>
</feature>
<feature type="propeptide" id="PRO_0000011094" evidence="5">
    <location>
        <begin position="21"/>
        <end position="48"/>
    </location>
</feature>
<feature type="chain" id="PRO_0000011095" description="Osteocalcin" evidence="6">
    <location>
        <begin position="49"/>
        <end position="97"/>
    </location>
</feature>
<feature type="domain" description="Gla" evidence="4">
    <location>
        <begin position="49"/>
        <end position="95"/>
    </location>
</feature>
<feature type="binding site" evidence="1">
    <location>
        <position position="65"/>
    </location>
    <ligand>
        <name>Ca(2+)</name>
        <dbReference type="ChEBI" id="CHEBI:29108"/>
        <label>1</label>
    </ligand>
</feature>
<feature type="binding site" evidence="1">
    <location>
        <position position="69"/>
    </location>
    <ligand>
        <name>Ca(2+)</name>
        <dbReference type="ChEBI" id="CHEBI:29108"/>
        <label>2</label>
    </ligand>
</feature>
<feature type="binding site" evidence="1">
    <location>
        <position position="72"/>
    </location>
    <ligand>
        <name>Ca(2+)</name>
        <dbReference type="ChEBI" id="CHEBI:29108"/>
        <label>2</label>
    </ligand>
</feature>
<feature type="binding site" evidence="1">
    <location>
        <position position="72"/>
    </location>
    <ligand>
        <name>Ca(2+)</name>
        <dbReference type="ChEBI" id="CHEBI:29108"/>
        <label>3</label>
    </ligand>
</feature>
<feature type="binding site" evidence="1">
    <location>
        <position position="78"/>
    </location>
    <ligand>
        <name>Ca(2+)</name>
        <dbReference type="ChEBI" id="CHEBI:29108"/>
        <label>3</label>
    </ligand>
</feature>
<feature type="modified residue" description="4-carboxyglutamate" evidence="4 5">
    <location>
        <position position="65"/>
    </location>
</feature>
<feature type="modified residue" description="4-carboxyglutamate" evidence="4 5">
    <location>
        <position position="69"/>
    </location>
</feature>
<feature type="modified residue" description="4-carboxyglutamate" evidence="4 5">
    <location>
        <position position="72"/>
    </location>
</feature>
<feature type="disulfide bond" evidence="4">
    <location>
        <begin position="71"/>
        <end position="77"/>
    </location>
</feature>
<comment type="function">
    <text evidence="2 5">The carboxylated form is one of the main organic components of the bone matrix, which constitutes 1-2% of the total bone protein (PubMed:6792200). The carboxylated form binds strongly to apatite and calcium (By similarity).</text>
</comment>
<comment type="subcellular location">
    <subcellularLocation>
        <location evidence="5">Secreted</location>
    </subcellularLocation>
</comment>
<comment type="PTM">
    <text evidence="4 5">Gamma-carboxyglutamate residues are formed by vitamin K dependent carboxylation by GGCX. These residues are essential for the binding of calcium.</text>
</comment>
<comment type="similarity">
    <text evidence="7">Belongs to the osteocalcin/matrix Gla protein family.</text>
</comment>
<proteinExistence type="evidence at protein level"/>
<name>OSTCN_CHICK</name>
<dbReference type="EMBL" id="U10578">
    <property type="protein sequence ID" value="AAA78809.1"/>
    <property type="molecule type" value="mRNA"/>
</dbReference>
<dbReference type="PIR" id="I50700">
    <property type="entry name" value="GECH"/>
</dbReference>
<dbReference type="SMR" id="P02822"/>
<dbReference type="FunCoup" id="P02822">
    <property type="interactions" value="101"/>
</dbReference>
<dbReference type="STRING" id="9031.ENSGALP00000055537"/>
<dbReference type="VEuPathDB" id="HostDB:geneid_396348"/>
<dbReference type="InParanoid" id="P02822"/>
<dbReference type="OrthoDB" id="9950568at2759"/>
<dbReference type="PhylomeDB" id="P02822"/>
<dbReference type="Proteomes" id="UP000000539">
    <property type="component" value="Unassembled WGS sequence"/>
</dbReference>
<dbReference type="GO" id="GO:0005576">
    <property type="term" value="C:extracellular region"/>
    <property type="evidence" value="ECO:0000318"/>
    <property type="project" value="GO_Central"/>
</dbReference>
<dbReference type="GO" id="GO:0005509">
    <property type="term" value="F:calcium ion binding"/>
    <property type="evidence" value="ECO:0007669"/>
    <property type="project" value="InterPro"/>
</dbReference>
<dbReference type="GO" id="GO:0005179">
    <property type="term" value="F:hormone activity"/>
    <property type="evidence" value="ECO:0000250"/>
    <property type="project" value="UniProtKB"/>
</dbReference>
<dbReference type="GO" id="GO:0046848">
    <property type="term" value="F:hydroxyapatite binding"/>
    <property type="evidence" value="ECO:0000318"/>
    <property type="project" value="GO_Central"/>
</dbReference>
<dbReference type="GO" id="GO:0008147">
    <property type="term" value="F:structural constituent of bone"/>
    <property type="evidence" value="ECO:0000250"/>
    <property type="project" value="UniProtKB"/>
</dbReference>
<dbReference type="GO" id="GO:0031214">
    <property type="term" value="P:biomineral tissue development"/>
    <property type="evidence" value="ECO:0007669"/>
    <property type="project" value="UniProtKB-KW"/>
</dbReference>
<dbReference type="GO" id="GO:0060348">
    <property type="term" value="P:bone development"/>
    <property type="evidence" value="ECO:0000318"/>
    <property type="project" value="GO_Central"/>
</dbReference>
<dbReference type="GO" id="GO:0032869">
    <property type="term" value="P:cellular response to insulin stimulus"/>
    <property type="evidence" value="ECO:0000250"/>
    <property type="project" value="UniProtKB"/>
</dbReference>
<dbReference type="GO" id="GO:0042593">
    <property type="term" value="P:glucose homeostasis"/>
    <property type="evidence" value="ECO:0000250"/>
    <property type="project" value="UniProtKB"/>
</dbReference>
<dbReference type="GO" id="GO:1903011">
    <property type="term" value="P:negative regulation of bone development"/>
    <property type="evidence" value="ECO:0000250"/>
    <property type="project" value="UniProtKB"/>
</dbReference>
<dbReference type="GO" id="GO:0001649">
    <property type="term" value="P:osteoblast differentiation"/>
    <property type="evidence" value="ECO:0000318"/>
    <property type="project" value="GO_Central"/>
</dbReference>
<dbReference type="GO" id="GO:0030500">
    <property type="term" value="P:regulation of bone mineralization"/>
    <property type="evidence" value="ECO:0007669"/>
    <property type="project" value="InterPro"/>
</dbReference>
<dbReference type="GO" id="GO:1900076">
    <property type="term" value="P:regulation of cellular response to insulin stimulus"/>
    <property type="evidence" value="ECO:0007669"/>
    <property type="project" value="InterPro"/>
</dbReference>
<dbReference type="GO" id="GO:0032571">
    <property type="term" value="P:response to vitamin K"/>
    <property type="evidence" value="ECO:0007669"/>
    <property type="project" value="InterPro"/>
</dbReference>
<dbReference type="GO" id="GO:0044342">
    <property type="term" value="P:type B pancreatic cell proliferation"/>
    <property type="evidence" value="ECO:0000250"/>
    <property type="project" value="UniProtKB"/>
</dbReference>
<dbReference type="InterPro" id="IPR035972">
    <property type="entry name" value="GLA-like_dom_SF"/>
</dbReference>
<dbReference type="InterPro" id="IPR000294">
    <property type="entry name" value="GLA_domain"/>
</dbReference>
<dbReference type="InterPro" id="IPR039176">
    <property type="entry name" value="Osteocalcin"/>
</dbReference>
<dbReference type="InterPro" id="IPR002384">
    <property type="entry name" value="Osteocalcin/MGP"/>
</dbReference>
<dbReference type="PANTHER" id="PTHR14235">
    <property type="entry name" value="OSTEOCALCIN"/>
    <property type="match status" value="1"/>
</dbReference>
<dbReference type="PANTHER" id="PTHR14235:SF0">
    <property type="entry name" value="OSTEOCALCIN"/>
    <property type="match status" value="1"/>
</dbReference>
<dbReference type="PRINTS" id="PR00002">
    <property type="entry name" value="GLABONE"/>
</dbReference>
<dbReference type="SMART" id="SM00069">
    <property type="entry name" value="GLA"/>
    <property type="match status" value="1"/>
</dbReference>
<dbReference type="SUPFAM" id="SSF57630">
    <property type="entry name" value="GLA-domain"/>
    <property type="match status" value="1"/>
</dbReference>
<dbReference type="PROSITE" id="PS00011">
    <property type="entry name" value="GLA_1"/>
    <property type="match status" value="1"/>
</dbReference>
<dbReference type="PROSITE" id="PS50998">
    <property type="entry name" value="GLA_2"/>
    <property type="match status" value="1"/>
</dbReference>